<keyword id="KW-0010">Activator</keyword>
<keyword id="KW-0112">Calmodulin-binding</keyword>
<keyword id="KW-0963">Cytoplasm</keyword>
<keyword id="KW-0221">Differentiation</keyword>
<keyword id="KW-0238">DNA-binding</keyword>
<keyword id="KW-0539">Nucleus</keyword>
<keyword id="KW-0726">Sexual differentiation</keyword>
<keyword id="KW-0804">Transcription</keyword>
<keyword id="KW-0805">Transcription regulation</keyword>
<name>SRY_ARCAU</name>
<accession>Q6T723</accession>
<sequence>MFGVLNSDDHRAAIQQRNILAFGRTSSELWTSNPTSNYWCETRGNGRDSGQNRVRRPMNAFMVWSRDQRRKVALENPQMQNSEISKQLGYQWKMLTEAEKWPFFEEAQRLQAVHREKYPDYKYRPRRKALPQKSDKLLPAASSSLLCRQVLVDKWYPFTYRDSCSRATHSHMEDQLSSSQPVNIANSLLQQEHHYSSTSLRGSPETLATHLSADPPFYPK</sequence>
<dbReference type="EMBL" id="AY429653">
    <property type="protein sequence ID" value="AAR10382.1"/>
    <property type="molecule type" value="Genomic_DNA"/>
</dbReference>
<dbReference type="SMR" id="Q6T723"/>
<dbReference type="GO" id="GO:0005737">
    <property type="term" value="C:cytoplasm"/>
    <property type="evidence" value="ECO:0007669"/>
    <property type="project" value="UniProtKB-SubCell"/>
</dbReference>
<dbReference type="GO" id="GO:0016607">
    <property type="term" value="C:nuclear speck"/>
    <property type="evidence" value="ECO:0007669"/>
    <property type="project" value="UniProtKB-SubCell"/>
</dbReference>
<dbReference type="GO" id="GO:0005634">
    <property type="term" value="C:nucleus"/>
    <property type="evidence" value="ECO:0000250"/>
    <property type="project" value="UniProtKB"/>
</dbReference>
<dbReference type="GO" id="GO:0005516">
    <property type="term" value="F:calmodulin binding"/>
    <property type="evidence" value="ECO:0007669"/>
    <property type="project" value="UniProtKB-KW"/>
</dbReference>
<dbReference type="GO" id="GO:0001228">
    <property type="term" value="F:DNA-binding transcription activator activity, RNA polymerase II-specific"/>
    <property type="evidence" value="ECO:0007669"/>
    <property type="project" value="TreeGrafter"/>
</dbReference>
<dbReference type="GO" id="GO:0000978">
    <property type="term" value="F:RNA polymerase II cis-regulatory region sequence-specific DNA binding"/>
    <property type="evidence" value="ECO:0007669"/>
    <property type="project" value="TreeGrafter"/>
</dbReference>
<dbReference type="GO" id="GO:0030154">
    <property type="term" value="P:cell differentiation"/>
    <property type="evidence" value="ECO:0007669"/>
    <property type="project" value="UniProtKB-KW"/>
</dbReference>
<dbReference type="GO" id="GO:0030238">
    <property type="term" value="P:male sex determination"/>
    <property type="evidence" value="ECO:0007669"/>
    <property type="project" value="InterPro"/>
</dbReference>
<dbReference type="GO" id="GO:0007548">
    <property type="term" value="P:sex differentiation"/>
    <property type="evidence" value="ECO:0007669"/>
    <property type="project" value="UniProtKB-KW"/>
</dbReference>
<dbReference type="CDD" id="cd22034">
    <property type="entry name" value="HMG-box_SoxA_SRY"/>
    <property type="match status" value="1"/>
</dbReference>
<dbReference type="FunFam" id="1.10.30.10:FF:000002">
    <property type="entry name" value="transcription factor Sox-2"/>
    <property type="match status" value="1"/>
</dbReference>
<dbReference type="Gene3D" id="1.10.30.10">
    <property type="entry name" value="High mobility group box domain"/>
    <property type="match status" value="1"/>
</dbReference>
<dbReference type="InterPro" id="IPR009071">
    <property type="entry name" value="HMG_box_dom"/>
</dbReference>
<dbReference type="InterPro" id="IPR036910">
    <property type="entry name" value="HMG_box_dom_sf"/>
</dbReference>
<dbReference type="InterPro" id="IPR017253">
    <property type="entry name" value="SRY"/>
</dbReference>
<dbReference type="InterPro" id="IPR050140">
    <property type="entry name" value="SRY-related_HMG-box_TF-like"/>
</dbReference>
<dbReference type="PANTHER" id="PTHR10270:SF161">
    <property type="entry name" value="SEX-DETERMINING REGION Y PROTEIN"/>
    <property type="match status" value="1"/>
</dbReference>
<dbReference type="PANTHER" id="PTHR10270">
    <property type="entry name" value="SOX TRANSCRIPTION FACTOR"/>
    <property type="match status" value="1"/>
</dbReference>
<dbReference type="Pfam" id="PF00505">
    <property type="entry name" value="HMG_box"/>
    <property type="match status" value="1"/>
</dbReference>
<dbReference type="PIRSF" id="PIRSF037653">
    <property type="entry name" value="SRY"/>
    <property type="match status" value="1"/>
</dbReference>
<dbReference type="SMART" id="SM00398">
    <property type="entry name" value="HMG"/>
    <property type="match status" value="1"/>
</dbReference>
<dbReference type="SUPFAM" id="SSF47095">
    <property type="entry name" value="HMG-box"/>
    <property type="match status" value="1"/>
</dbReference>
<dbReference type="PROSITE" id="PS50118">
    <property type="entry name" value="HMG_BOX_2"/>
    <property type="match status" value="1"/>
</dbReference>
<evidence type="ECO:0000250" key="1">
    <source>
        <dbReference type="UniProtKB" id="P36394"/>
    </source>
</evidence>
<evidence type="ECO:0000250" key="2">
    <source>
        <dbReference type="UniProtKB" id="Q05066"/>
    </source>
</evidence>
<evidence type="ECO:0000255" key="3">
    <source>
        <dbReference type="PROSITE-ProRule" id="PRU00267"/>
    </source>
</evidence>
<evidence type="ECO:0000256" key="4">
    <source>
        <dbReference type="SAM" id="MobiDB-lite"/>
    </source>
</evidence>
<evidence type="ECO:0000305" key="5"/>
<organism>
    <name type="scientific">Arctocephalus australis</name>
    <name type="common">South American fur seal</name>
    <name type="synonym">Phoca australis</name>
    <dbReference type="NCBI Taxonomy" id="161928"/>
    <lineage>
        <taxon>Eukaryota</taxon>
        <taxon>Metazoa</taxon>
        <taxon>Chordata</taxon>
        <taxon>Craniata</taxon>
        <taxon>Vertebrata</taxon>
        <taxon>Euteleostomi</taxon>
        <taxon>Mammalia</taxon>
        <taxon>Eutheria</taxon>
        <taxon>Laurasiatheria</taxon>
        <taxon>Carnivora</taxon>
        <taxon>Caniformia</taxon>
        <taxon>Pinnipedia</taxon>
        <taxon>Otariidae</taxon>
        <taxon>Arctocephalus</taxon>
    </lineage>
</organism>
<feature type="chain" id="PRO_0000048634" description="Sex-determining region Y protein">
    <location>
        <begin position="1"/>
        <end position="220"/>
    </location>
</feature>
<feature type="DNA-binding region" description="HMG box" evidence="3">
    <location>
        <begin position="54"/>
        <end position="122"/>
    </location>
</feature>
<feature type="region of interest" description="Disordered" evidence="4">
    <location>
        <begin position="193"/>
        <end position="220"/>
    </location>
</feature>
<proteinExistence type="inferred from homology"/>
<protein>
    <recommendedName>
        <fullName>Sex-determining region Y protein</fullName>
    </recommendedName>
    <alternativeName>
        <fullName>Testis-determining factor</fullName>
    </alternativeName>
</protein>
<gene>
    <name type="primary">SRY</name>
    <name type="synonym">TDF</name>
</gene>
<comment type="function">
    <text evidence="1 2">Transcriptional regulator that controls a genetic switch in male development. It is necessary and sufficient for initiating male sex determination by directing the development of supporting cell precursors (pre-Sertoli cells) as Sertoli rather than granulosa cells. Involved in different aspects of gene regulation including promoter activation or repression. Binds to the DNA consensus sequence 5'-[AT]AACAA[AT]-3'. SRY HMG box recognizes DNA by partial intercalation in the minor groove and promotes DNA bending. Also involved in pre-mRNA splicing (By similarity). In male adult brain involved in the maintenance of motor functions of dopaminergic neurons (By similarity).</text>
</comment>
<comment type="subunit">
    <text evidence="2">Interacts with CALM, EP300, HDAC3, KPNB1, ZNF208 isoform KRAB-O, PARP1, SLC9A3R2 and WT1. The interaction with EP300 modulates its DNA-binding activity. The interaction with KPNB1 is sensitive to dissociation by Ran in the GTP-bound form. Interaction with PARP1 impaired its DNA-binding activity.</text>
</comment>
<comment type="subcellular location">
    <subcellularLocation>
        <location evidence="2">Nucleus speckle</location>
    </subcellularLocation>
    <subcellularLocation>
        <location evidence="2">Cytoplasm</location>
    </subcellularLocation>
    <subcellularLocation>
        <location evidence="2">Nucleus</location>
    </subcellularLocation>
</comment>
<comment type="similarity">
    <text evidence="5">Belongs to the SRY family.</text>
</comment>
<comment type="online information" name="Protein Spotlight">
    <link uri="https://www.proteinspotlight.org/back_issues/080"/>
    <text>The tenuous nature of sex - Issue 80 of March 2007</text>
</comment>
<reference key="1">
    <citation type="submission" date="2003-09" db="EMBL/GenBank/DDBJ databases">
        <title>A phylogeny of the pinnipeds from mitochondrial and single copy nuclear gene sequences.</title>
        <authorList>
            <person name="Kinnear M.W."/>
            <person name="Walker G."/>
            <person name="Amos W."/>
        </authorList>
    </citation>
    <scope>NUCLEOTIDE SEQUENCE [GENOMIC DNA]</scope>
</reference>